<sequence>MQGLAFLAALACWRCISLTCGATGALPTTATTITRSATQLINGRTNLSIELEFNGTSFFLNWQNLLNVITEPALTELWTSAEVAEDLRVTLKKRQSLFFPNKTVVISGDGHRYTCEVPTSSQTYNITKGFNYSALPGHLGGFGINARLVLGDIFASKWSLFARDTPEYRVFYPMNVMAVKFSISIGNNESGVALYGVVSEDFVVVTLHNRSKEANETASHLLFGLPDSLPSLKGHATYDELTFARNAKYALVAILPKDSYQTLLTENYTRIFLNMTESTPLEFTRTIQTRIVSIEARRACAAQEAAPDIFLVLFQMLVAHFLVARGIAEHRFVEVDCVCRQYAELYFLRRISRLCMPTFTTVGYNHTTLGAVAATQIARVSATKLASLPRSSQETVLAMVQLGARDGAVPSSILEGIAMVVEHMYTAYTYVYTLGDTERKLMLDIHTVLTDSCPPKDSGVSEKLLRTYLMFTSMCTNIELGEMIARFSKPDSLNIYRAFSPCFLGLRYDLHPAKLRAEAPQSSALTRTAVARGTSGFAELLHALHLDSLNLIPAINCSKITADKIIATVPLPHVTYIISSEALSNAVVYEVSEIFLKSAMFISAIKPDCSGFNFSQIDRHIPIVYNISTPRRGCPLCDSVIMSYDESDGLQSLMYVTNERVQTNLFLDKSPFFDNNNLHIHYLWLRDNGTVVEIRGMYRRRAASALFLILSFIGFSGVIYFLYRLFSILY</sequence>
<comment type="function">
    <text evidence="1 2 3">The heterodimer glycoprotein H-glycoprotein L is required for the fusion of viral and plasma membranes leading to virus entry into the host cell. Following initial binding to host receptor, membrane fusion is mediated by the fusion machinery composed of gB and the heterodimer gH/gL. May also be involved in the fusion between the virion envelope and the outer nuclear membrane during virion morphogenesis (By similarity). Targets host EPHA2 to promote KSHV entry.</text>
</comment>
<comment type="subunit">
    <text evidence="1 3">Interacts with glycoprotein L (gL); this interaction is necessary for the correct processing and cell surface expression of gH. The heterodimer gH/gL seems to interact with gB trimers during fusion (By similarity). When in complex with gL, interacts with host EPHA2; this interaction triggers EPHA2 phosphorylation and endocytosis allowing KSHV entry.</text>
</comment>
<comment type="subcellular location">
    <subcellularLocation>
        <location evidence="1">Virion membrane</location>
        <topology evidence="1">Single-pass type I membrane protein</topology>
    </subcellularLocation>
    <subcellularLocation>
        <location evidence="1">Host cell membrane</location>
        <topology evidence="1">Single-pass type I membrane protein</topology>
    </subcellularLocation>
    <subcellularLocation>
        <location evidence="1">Host endosome membrane</location>
        <topology evidence="1">Single-pass type I membrane protein</topology>
    </subcellularLocation>
    <text evidence="1">During virion morphogenesis, this protein probably accumulates in the endosomes and trans-Golgi where secondary envelopment occurs. It is probably transported to the cell surface from where it is endocytosed and directed to the trans-Golgi network (TGN).</text>
</comment>
<comment type="PTM">
    <text evidence="1">N-glycosylated, O-glycosylated, and sialylated.</text>
</comment>
<comment type="similarity">
    <text evidence="1">Belongs to the herpesviridae glycoprotein H family.</text>
</comment>
<reference key="1">
    <citation type="journal article" date="1999" name="J. Virol.">
        <title>Identification of a spliced gene from Kaposi's sarcoma-associated herpesvirus encoding a protein with similarities to latent membrane proteins 1 and 2A of Epstein-Barr virus.</title>
        <authorList>
            <person name="Glenn M."/>
            <person name="Rainbow L."/>
            <person name="Aurade F."/>
            <person name="Davison A."/>
            <person name="Schulz T.F."/>
        </authorList>
    </citation>
    <scope>NUCLEOTIDE SEQUENCE [LARGE SCALE GENOMIC DNA]</scope>
</reference>
<reference key="2">
    <citation type="journal article" date="2006" name="J. Gen. Virol.">
        <title>Kaposi's sarcoma-associated herpesvirus immune modulation: an overview.</title>
        <authorList>
            <person name="Rezaee S.A.R."/>
            <person name="Cunningham C."/>
            <person name="Davison A.J."/>
            <person name="Blackbourn D.J."/>
        </authorList>
    </citation>
    <scope>NUCLEOTIDE SEQUENCE [LARGE SCALE GENOMIC DNA]</scope>
</reference>
<reference key="3">
    <citation type="journal article" date="2002" name="J. Virol.">
        <title>Human herpesvirus 8 glycoprotein B (gB), gH, and gL can mediate cell fusion.</title>
        <authorList>
            <person name="Pertel P.E."/>
        </authorList>
    </citation>
    <scope>FUNCTION</scope>
</reference>
<reference key="4">
    <citation type="journal article" date="2012" name="Nat. Med.">
        <title>The ephrin receptor tyrosine kinase A2 is a cellular receptor for Kaposi's sarcoma-associated herpesvirus.</title>
        <authorList>
            <person name="Hahn A.S."/>
            <person name="Kaufmann J.K."/>
            <person name="Wies E."/>
            <person name="Naschberger E."/>
            <person name="Panteleev-Ivlev J."/>
            <person name="Schmidt K."/>
            <person name="Holzer A."/>
            <person name="Schmidt M."/>
            <person name="Chen J."/>
            <person name="Konig S."/>
            <person name="Ensser A."/>
            <person name="Myoung J."/>
            <person name="Brockmeyer N.H."/>
            <person name="Sturzl M."/>
            <person name="Fleckenstein B."/>
            <person name="Neipel F."/>
        </authorList>
    </citation>
    <scope>FUNCTION</scope>
    <scope>INTERACTION WITH HOST EPHA2</scope>
</reference>
<name>GH_HHV8P</name>
<protein>
    <recommendedName>
        <fullName evidence="1">Envelope glycoprotein H</fullName>
        <shortName evidence="1">gH</shortName>
    </recommendedName>
</protein>
<accession>F5HAK9</accession>
<organismHost>
    <name type="scientific">Homo sapiens</name>
    <name type="common">Human</name>
    <dbReference type="NCBI Taxonomy" id="9606"/>
</organismHost>
<dbReference type="EMBL" id="AF148805">
    <property type="protein sequence ID" value="ABD28873.1"/>
    <property type="molecule type" value="Genomic_DNA"/>
</dbReference>
<dbReference type="RefSeq" id="YP_001129375.1">
    <property type="nucleotide sequence ID" value="NC_009333.1"/>
</dbReference>
<dbReference type="SMR" id="F5HAK9"/>
<dbReference type="GlyCosmos" id="F5HAK9">
    <property type="glycosylation" value="15 sites, No reported glycans"/>
</dbReference>
<dbReference type="ABCD" id="F5HAK9">
    <property type="antibodies" value="2 sequenced antibodies"/>
</dbReference>
<dbReference type="DNASU" id="4961506"/>
<dbReference type="GeneID" id="4961506"/>
<dbReference type="KEGG" id="vg:4961506"/>
<dbReference type="Proteomes" id="UP000000942">
    <property type="component" value="Segment"/>
</dbReference>
<dbReference type="GO" id="GO:0044175">
    <property type="term" value="C:host cell endosome membrane"/>
    <property type="evidence" value="ECO:0007669"/>
    <property type="project" value="UniProtKB-SubCell"/>
</dbReference>
<dbReference type="GO" id="GO:0020002">
    <property type="term" value="C:host cell plasma membrane"/>
    <property type="evidence" value="ECO:0007669"/>
    <property type="project" value="UniProtKB-SubCell"/>
</dbReference>
<dbReference type="GO" id="GO:0016020">
    <property type="term" value="C:membrane"/>
    <property type="evidence" value="ECO:0007669"/>
    <property type="project" value="UniProtKB-KW"/>
</dbReference>
<dbReference type="GO" id="GO:0019031">
    <property type="term" value="C:viral envelope"/>
    <property type="evidence" value="ECO:0000314"/>
    <property type="project" value="CACAO"/>
</dbReference>
<dbReference type="GO" id="GO:0055036">
    <property type="term" value="C:virion membrane"/>
    <property type="evidence" value="ECO:0007669"/>
    <property type="project" value="UniProtKB-SubCell"/>
</dbReference>
<dbReference type="GO" id="GO:0019064">
    <property type="term" value="P:fusion of virus membrane with host plasma membrane"/>
    <property type="evidence" value="ECO:0007669"/>
    <property type="project" value="UniProtKB-KW"/>
</dbReference>
<dbReference type="GO" id="GO:0046718">
    <property type="term" value="P:symbiont entry into host cell"/>
    <property type="evidence" value="ECO:0007669"/>
    <property type="project" value="UniProtKB-KW"/>
</dbReference>
<dbReference type="Gene3D" id="2.60.40.3190">
    <property type="entry name" value="Herpesvirus glycoprotein H, C-terminal domain"/>
    <property type="match status" value="1"/>
</dbReference>
<dbReference type="Gene3D" id="3.90.380.20">
    <property type="entry name" value="Herpesvirus glycoprotein H, domain D-II"/>
    <property type="match status" value="1"/>
</dbReference>
<dbReference type="HAMAP" id="MF_04033">
    <property type="entry name" value="HSV_GH"/>
    <property type="match status" value="1"/>
</dbReference>
<dbReference type="InterPro" id="IPR003493">
    <property type="entry name" value="Herpes_gH"/>
</dbReference>
<dbReference type="InterPro" id="IPR035305">
    <property type="entry name" value="Herpes_glycoH_C"/>
</dbReference>
<dbReference type="InterPro" id="IPR038172">
    <property type="entry name" value="Herpes_glycoH_C_sf"/>
</dbReference>
<dbReference type="Pfam" id="PF17488">
    <property type="entry name" value="Herpes_glycoH_C"/>
    <property type="match status" value="1"/>
</dbReference>
<dbReference type="Pfam" id="PF02489">
    <property type="entry name" value="Herpes_glycop_H"/>
    <property type="match status" value="1"/>
</dbReference>
<gene>
    <name evidence="1" type="primary">gH</name>
    <name type="synonym">ORF22</name>
</gene>
<evidence type="ECO:0000255" key="1">
    <source>
        <dbReference type="HAMAP-Rule" id="MF_04033"/>
    </source>
</evidence>
<evidence type="ECO:0000269" key="2">
    <source>
    </source>
</evidence>
<evidence type="ECO:0000269" key="3">
    <source>
    </source>
</evidence>
<keyword id="KW-1169">Fusion of virus membrane with host cell membrane</keyword>
<keyword id="KW-1168">Fusion of virus membrane with host membrane</keyword>
<keyword id="KW-0325">Glycoprotein</keyword>
<keyword id="KW-1032">Host cell membrane</keyword>
<keyword id="KW-1039">Host endosome</keyword>
<keyword id="KW-1043">Host membrane</keyword>
<keyword id="KW-0472">Membrane</keyword>
<keyword id="KW-1185">Reference proteome</keyword>
<keyword id="KW-0730">Sialic acid</keyword>
<keyword id="KW-0732">Signal</keyword>
<keyword id="KW-0812">Transmembrane</keyword>
<keyword id="KW-1133">Transmembrane helix</keyword>
<keyword id="KW-0261">Viral envelope protein</keyword>
<keyword id="KW-1162">Viral penetration into host cytoplasm</keyword>
<keyword id="KW-0946">Virion</keyword>
<keyword id="KW-1160">Virus entry into host cell</keyword>
<organism>
    <name type="scientific">Human herpesvirus 8 type P (isolate GK18)</name>
    <name type="common">HHV-8</name>
    <name type="synonym">Kaposi's sarcoma-associated herpesvirus</name>
    <dbReference type="NCBI Taxonomy" id="868565"/>
    <lineage>
        <taxon>Viruses</taxon>
        <taxon>Duplodnaviria</taxon>
        <taxon>Heunggongvirae</taxon>
        <taxon>Peploviricota</taxon>
        <taxon>Herviviricetes</taxon>
        <taxon>Herpesvirales</taxon>
        <taxon>Orthoherpesviridae</taxon>
        <taxon>Gammaherpesvirinae</taxon>
        <taxon>Rhadinovirus</taxon>
        <taxon>Rhadinovirus humangamma8</taxon>
        <taxon>Human herpesvirus 8</taxon>
    </lineage>
</organism>
<proteinExistence type="evidence at protein level"/>
<feature type="signal peptide" evidence="1">
    <location>
        <begin position="1"/>
        <end position="21"/>
    </location>
</feature>
<feature type="chain" id="PRO_0000436655" description="Envelope glycoprotein H" evidence="1">
    <location>
        <begin position="22"/>
        <end position="730"/>
    </location>
</feature>
<feature type="topological domain" description="Virion surface" evidence="1">
    <location>
        <begin position="22"/>
        <end position="706"/>
    </location>
</feature>
<feature type="transmembrane region" description="Helical" evidence="1">
    <location>
        <begin position="707"/>
        <end position="727"/>
    </location>
</feature>
<feature type="topological domain" description="Intravirion" evidence="1">
    <location>
        <begin position="728"/>
        <end position="730"/>
    </location>
</feature>
<feature type="region of interest" description="Interaction with gL" evidence="1">
    <location>
        <begin position="190"/>
        <end position="254"/>
    </location>
</feature>
<feature type="glycosylation site" description="N-linked (GlcNAc...) asparagine; by host" evidence="1">
    <location>
        <position position="46"/>
    </location>
</feature>
<feature type="glycosylation site" description="N-linked (GlcNAc...) asparagine; by host" evidence="1">
    <location>
        <position position="54"/>
    </location>
</feature>
<feature type="glycosylation site" description="N-linked (GlcNAc...) asparagine; by host" evidence="1">
    <location>
        <position position="101"/>
    </location>
</feature>
<feature type="glycosylation site" description="N-linked (GlcNAc...) asparagine; by host" evidence="1">
    <location>
        <position position="125"/>
    </location>
</feature>
<feature type="glycosylation site" description="N-linked (GlcNAc...) asparagine; by host" evidence="1">
    <location>
        <position position="131"/>
    </location>
</feature>
<feature type="glycosylation site" description="N-linked (GlcNAc...) asparagine; by host" evidence="1">
    <location>
        <position position="188"/>
    </location>
</feature>
<feature type="glycosylation site" description="N-linked (GlcNAc...) asparagine; by host" evidence="1">
    <location>
        <position position="209"/>
    </location>
</feature>
<feature type="glycosylation site" description="N-linked (GlcNAc...) asparagine; by host" evidence="1">
    <location>
        <position position="215"/>
    </location>
</feature>
<feature type="glycosylation site" description="N-linked (GlcNAc...) asparagine; by host" evidence="1">
    <location>
        <position position="267"/>
    </location>
</feature>
<feature type="glycosylation site" description="N-linked (GlcNAc...) asparagine; by host" evidence="1">
    <location>
        <position position="274"/>
    </location>
</feature>
<feature type="glycosylation site" description="N-linked (GlcNAc...) asparagine; by host" evidence="1">
    <location>
        <position position="365"/>
    </location>
</feature>
<feature type="glycosylation site" description="N-linked (GlcNAc...) asparagine; by host" evidence="1">
    <location>
        <position position="556"/>
    </location>
</feature>
<feature type="glycosylation site" description="N-linked (GlcNAc...) asparagine; by host" evidence="1">
    <location>
        <position position="613"/>
    </location>
</feature>
<feature type="glycosylation site" description="N-linked (GlcNAc...) asparagine; by host" evidence="1">
    <location>
        <position position="626"/>
    </location>
</feature>
<feature type="glycosylation site" description="N-linked (GlcNAc...) asparagine; by host" evidence="1">
    <location>
        <position position="688"/>
    </location>
</feature>